<name>ASK16_ARATH</name>
<evidence type="ECO:0000250" key="1"/>
<evidence type="ECO:0000269" key="2">
    <source>
    </source>
</evidence>
<evidence type="ECO:0000269" key="3">
    <source>
    </source>
</evidence>
<evidence type="ECO:0000269" key="4">
    <source>
    </source>
</evidence>
<evidence type="ECO:0000269" key="5">
    <source>
    </source>
</evidence>
<evidence type="ECO:0000305" key="6"/>
<accession>O81055</accession>
<gene>
    <name type="primary">ASK16</name>
    <name type="ordered locus">At2g03190</name>
    <name type="ORF">T18E12.14</name>
</gene>
<reference key="1">
    <citation type="journal article" date="1999" name="Nature">
        <title>Sequence and analysis of chromosome 2 of the plant Arabidopsis thaliana.</title>
        <authorList>
            <person name="Lin X."/>
            <person name="Kaul S."/>
            <person name="Rounsley S.D."/>
            <person name="Shea T.P."/>
            <person name="Benito M.-I."/>
            <person name="Town C.D."/>
            <person name="Fujii C.Y."/>
            <person name="Mason T.M."/>
            <person name="Bowman C.L."/>
            <person name="Barnstead M.E."/>
            <person name="Feldblyum T.V."/>
            <person name="Buell C.R."/>
            <person name="Ketchum K.A."/>
            <person name="Lee J.J."/>
            <person name="Ronning C.M."/>
            <person name="Koo H.L."/>
            <person name="Moffat K.S."/>
            <person name="Cronin L.A."/>
            <person name="Shen M."/>
            <person name="Pai G."/>
            <person name="Van Aken S."/>
            <person name="Umayam L."/>
            <person name="Tallon L.J."/>
            <person name="Gill J.E."/>
            <person name="Adams M.D."/>
            <person name="Carrera A.J."/>
            <person name="Creasy T.H."/>
            <person name="Goodman H.M."/>
            <person name="Somerville C.R."/>
            <person name="Copenhaver G.P."/>
            <person name="Preuss D."/>
            <person name="Nierman W.C."/>
            <person name="White O."/>
            <person name="Eisen J.A."/>
            <person name="Salzberg S.L."/>
            <person name="Fraser C.M."/>
            <person name="Venter J.C."/>
        </authorList>
    </citation>
    <scope>NUCLEOTIDE SEQUENCE [LARGE SCALE GENOMIC DNA]</scope>
    <source>
        <strain>cv. Columbia</strain>
    </source>
</reference>
<reference key="2">
    <citation type="journal article" date="2017" name="Plant J.">
        <title>Araport11: a complete reannotation of the Arabidopsis thaliana reference genome.</title>
        <authorList>
            <person name="Cheng C.Y."/>
            <person name="Krishnakumar V."/>
            <person name="Chan A.P."/>
            <person name="Thibaud-Nissen F."/>
            <person name="Schobel S."/>
            <person name="Town C.D."/>
        </authorList>
    </citation>
    <scope>GENOME REANNOTATION</scope>
    <source>
        <strain>cv. Columbia</strain>
    </source>
</reference>
<reference key="3">
    <citation type="submission" date="2004-09" db="EMBL/GenBank/DDBJ databases">
        <title>Arabidopsis ORF clones.</title>
        <authorList>
            <person name="Cheuk R.F."/>
            <person name="Chen H."/>
            <person name="Kim C.J."/>
            <person name="Shinn P."/>
            <person name="Ecker J.R."/>
        </authorList>
    </citation>
    <scope>NUCLEOTIDE SEQUENCE [LARGE SCALE MRNA]</scope>
    <source>
        <strain>cv. Columbia</strain>
    </source>
</reference>
<reference key="4">
    <citation type="journal article" date="2002" name="Proc. Natl. Acad. Sci. U.S.A.">
        <title>The F-box subunit of the SCF E3 complex is encoded by a diverse superfamily of genes in Arabidopsis.</title>
        <authorList>
            <person name="Gagne J.M."/>
            <person name="Downes B.P."/>
            <person name="Shiu S.-H."/>
            <person name="Durski A.M."/>
            <person name="Vierstra R.D."/>
        </authorList>
    </citation>
    <scope>INTERACTION WITH AT4G11590</scope>
</reference>
<reference key="5">
    <citation type="journal article" date="2003" name="Plant Physiol.">
        <title>Members of the Arabidopsis-SKP1-like gene family exhibit a variety of expression patterns and may play diverse roles in Arabidopsis.</title>
        <authorList>
            <person name="Zhao D."/>
            <person name="Ni W."/>
            <person name="Feng B."/>
            <person name="Han T."/>
            <person name="Petrasek M.G."/>
            <person name="Ma H."/>
        </authorList>
    </citation>
    <scope>GENE FAMILY</scope>
    <scope>NOMENCLATURE</scope>
    <scope>TISSUE SPECIFICITY</scope>
</reference>
<reference key="6">
    <citation type="journal article" date="2004" name="Plant Cell Physiol.">
        <title>Expression and interaction analysis of Arabidopsis Skp1-related genes.</title>
        <authorList>
            <person name="Takahashi N."/>
            <person name="Kuroda H."/>
            <person name="Kuromori T."/>
            <person name="Hirayama T."/>
            <person name="Seki M."/>
            <person name="Shinozaki K."/>
            <person name="Shimada H."/>
            <person name="Matsui M."/>
        </authorList>
    </citation>
    <scope>INTERACTION WITH AT3G61590</scope>
</reference>
<reference key="7">
    <citation type="journal article" date="2009" name="Plant J.">
        <title>An F-box gene, CPR30, functions as a negative regulator of the defense response in Arabidopsis.</title>
        <authorList>
            <person name="Gou M."/>
            <person name="Su N."/>
            <person name="Zheng J."/>
            <person name="Huai J."/>
            <person name="Wu G."/>
            <person name="Zhao J."/>
            <person name="He J."/>
            <person name="Tang D."/>
            <person name="Yang S."/>
            <person name="Wang G."/>
        </authorList>
    </citation>
    <scope>INTERACTION WITH CPR1/CPR30</scope>
</reference>
<sequence>MSSNKIVLTSSDDESFEVEEAVARKLKVIAHMIDDDCADKAIPLENVTGNILALVIEYCKKHVLDDVDDSDDSTEATSENVNEEAKNELRTWDAEFMKEFDMETVMKLILAVNYLNVQDLLGLTCQTVADHMKDMSPEEVRELFNIENDYTPEEEDAIRKENAWAFEDLK</sequence>
<organism>
    <name type="scientific">Arabidopsis thaliana</name>
    <name type="common">Mouse-ear cress</name>
    <dbReference type="NCBI Taxonomy" id="3702"/>
    <lineage>
        <taxon>Eukaryota</taxon>
        <taxon>Viridiplantae</taxon>
        <taxon>Streptophyta</taxon>
        <taxon>Embryophyta</taxon>
        <taxon>Tracheophyta</taxon>
        <taxon>Spermatophyta</taxon>
        <taxon>Magnoliopsida</taxon>
        <taxon>eudicotyledons</taxon>
        <taxon>Gunneridae</taxon>
        <taxon>Pentapetalae</taxon>
        <taxon>rosids</taxon>
        <taxon>malvids</taxon>
        <taxon>Brassicales</taxon>
        <taxon>Brassicaceae</taxon>
        <taxon>Camelineae</taxon>
        <taxon>Arabidopsis</taxon>
    </lineage>
</organism>
<dbReference type="EMBL" id="AC005313">
    <property type="protein sequence ID" value="AAC34483.1"/>
    <property type="molecule type" value="Genomic_DNA"/>
</dbReference>
<dbReference type="EMBL" id="CP002685">
    <property type="protein sequence ID" value="AEC05673.1"/>
    <property type="molecule type" value="Genomic_DNA"/>
</dbReference>
<dbReference type="EMBL" id="BT015070">
    <property type="protein sequence ID" value="AAT71942.1"/>
    <property type="molecule type" value="mRNA"/>
</dbReference>
<dbReference type="EMBL" id="BT015726">
    <property type="protein sequence ID" value="AAU45224.1"/>
    <property type="molecule type" value="mRNA"/>
</dbReference>
<dbReference type="PIR" id="T02707">
    <property type="entry name" value="T02707"/>
</dbReference>
<dbReference type="RefSeq" id="NP_565297.1">
    <property type="nucleotide sequence ID" value="NM_126370.2"/>
</dbReference>
<dbReference type="SMR" id="O81055"/>
<dbReference type="BioGRID" id="250">
    <property type="interactions" value="28"/>
</dbReference>
<dbReference type="ComplexPortal" id="CPX-1443">
    <property type="entry name" value="SCF(COI1) ubiquitin ligase complex, variant CUL1-RBX1A-ASK16"/>
</dbReference>
<dbReference type="ComplexPortal" id="CPX-1464">
    <property type="entry name" value="SCF(COI1) ubiquitin ligase complex, variant CUL1-RBX1B-ASK16"/>
</dbReference>
<dbReference type="ComplexPortal" id="CPX-1486">
    <property type="entry name" value="SCF(COI1) ubiquitin ligase complex, variant CUL2-RBX1A-ASK16"/>
</dbReference>
<dbReference type="ComplexPortal" id="CPX-1509">
    <property type="entry name" value="SCF(COI1) ubiquitin ligase complex, variant CUL2-RBX1B-ASK16"/>
</dbReference>
<dbReference type="ComplexPortal" id="CPX-1529">
    <property type="entry name" value="SCF(TIR1) ubiquitin ligase complex, variant CUL1-RBX1A-ASK16"/>
</dbReference>
<dbReference type="ComplexPortal" id="CPX-1550">
    <property type="entry name" value="SCF(TIR1) ubiquitin ligase complex, variant CUL1-RBX1B-ASK16"/>
</dbReference>
<dbReference type="ComplexPortal" id="CPX-1572">
    <property type="entry name" value="SCF(TIR1) ubiquitin ligase complex, variant CUL2-RBX1A-ASK16"/>
</dbReference>
<dbReference type="ComplexPortal" id="CPX-1593">
    <property type="entry name" value="SCF(TIR1) ubiquitin ligase complex, variant CUL2-RBX1B-ASK16"/>
</dbReference>
<dbReference type="DIP" id="DIP-31337N"/>
<dbReference type="FunCoup" id="O81055">
    <property type="interactions" value="336"/>
</dbReference>
<dbReference type="IntAct" id="O81055">
    <property type="interactions" value="7"/>
</dbReference>
<dbReference type="STRING" id="3702.O81055"/>
<dbReference type="PaxDb" id="3702-AT2G03190.1"/>
<dbReference type="EnsemblPlants" id="AT2G03190.1">
    <property type="protein sequence ID" value="AT2G03190.1"/>
    <property type="gene ID" value="AT2G03190"/>
</dbReference>
<dbReference type="GeneID" id="814848"/>
<dbReference type="Gramene" id="AT2G03190.1">
    <property type="protein sequence ID" value="AT2G03190.1"/>
    <property type="gene ID" value="AT2G03190"/>
</dbReference>
<dbReference type="KEGG" id="ath:AT2G03190"/>
<dbReference type="Araport" id="AT2G03190"/>
<dbReference type="TAIR" id="AT2G03190">
    <property type="gene designation" value="SK16"/>
</dbReference>
<dbReference type="eggNOG" id="KOG1724">
    <property type="taxonomic scope" value="Eukaryota"/>
</dbReference>
<dbReference type="HOGENOM" id="CLU_059252_6_1_1"/>
<dbReference type="InParanoid" id="O81055"/>
<dbReference type="OMA" id="RILESWM"/>
<dbReference type="PhylomeDB" id="O81055"/>
<dbReference type="UniPathway" id="UPA00143"/>
<dbReference type="PRO" id="PR:O81055"/>
<dbReference type="Proteomes" id="UP000006548">
    <property type="component" value="Chromosome 2"/>
</dbReference>
<dbReference type="ExpressionAtlas" id="O81055">
    <property type="expression patterns" value="baseline and differential"/>
</dbReference>
<dbReference type="GO" id="GO:0005634">
    <property type="term" value="C:nucleus"/>
    <property type="evidence" value="ECO:0007669"/>
    <property type="project" value="UniProtKB-SubCell"/>
</dbReference>
<dbReference type="GO" id="GO:0019005">
    <property type="term" value="C:SCF ubiquitin ligase complex"/>
    <property type="evidence" value="ECO:0000250"/>
    <property type="project" value="TAIR"/>
</dbReference>
<dbReference type="GO" id="GO:0009734">
    <property type="term" value="P:auxin-activated signaling pathway"/>
    <property type="evidence" value="ECO:0000303"/>
    <property type="project" value="ComplexPortal"/>
</dbReference>
<dbReference type="GO" id="GO:0009867">
    <property type="term" value="P:jasmonic acid mediated signaling pathway"/>
    <property type="evidence" value="ECO:0000315"/>
    <property type="project" value="ComplexPortal"/>
</dbReference>
<dbReference type="GO" id="GO:0016567">
    <property type="term" value="P:protein ubiquitination"/>
    <property type="evidence" value="ECO:0007669"/>
    <property type="project" value="UniProtKB-UniPathway"/>
</dbReference>
<dbReference type="GO" id="GO:0009733">
    <property type="term" value="P:response to auxin"/>
    <property type="evidence" value="ECO:0000303"/>
    <property type="project" value="ComplexPortal"/>
</dbReference>
<dbReference type="GO" id="GO:0009753">
    <property type="term" value="P:response to jasmonic acid"/>
    <property type="evidence" value="ECO:0000315"/>
    <property type="project" value="ComplexPortal"/>
</dbReference>
<dbReference type="GO" id="GO:0006511">
    <property type="term" value="P:ubiquitin-dependent protein catabolic process"/>
    <property type="evidence" value="ECO:0000304"/>
    <property type="project" value="TAIR"/>
</dbReference>
<dbReference type="CDD" id="cd18322">
    <property type="entry name" value="BTB_POZ_SKP1"/>
    <property type="match status" value="1"/>
</dbReference>
<dbReference type="FunFam" id="3.30.710.10:FF:000269">
    <property type="entry name" value="SKP1-like protein 14"/>
    <property type="match status" value="1"/>
</dbReference>
<dbReference type="Gene3D" id="3.30.710.10">
    <property type="entry name" value="Potassium Channel Kv1.1, Chain A"/>
    <property type="match status" value="1"/>
</dbReference>
<dbReference type="InterPro" id="IPR016897">
    <property type="entry name" value="SKP1"/>
</dbReference>
<dbReference type="InterPro" id="IPR001232">
    <property type="entry name" value="SKP1-like"/>
</dbReference>
<dbReference type="InterPro" id="IPR036296">
    <property type="entry name" value="SKP1-like_dim_sf"/>
</dbReference>
<dbReference type="InterPro" id="IPR011333">
    <property type="entry name" value="SKP1/BTB/POZ_sf"/>
</dbReference>
<dbReference type="InterPro" id="IPR016072">
    <property type="entry name" value="Skp1_comp_dimer"/>
</dbReference>
<dbReference type="InterPro" id="IPR016073">
    <property type="entry name" value="Skp1_comp_POZ"/>
</dbReference>
<dbReference type="PANTHER" id="PTHR11165">
    <property type="entry name" value="SKP1"/>
    <property type="match status" value="1"/>
</dbReference>
<dbReference type="Pfam" id="PF01466">
    <property type="entry name" value="Skp1"/>
    <property type="match status" value="1"/>
</dbReference>
<dbReference type="Pfam" id="PF03931">
    <property type="entry name" value="Skp1_POZ"/>
    <property type="match status" value="1"/>
</dbReference>
<dbReference type="PIRSF" id="PIRSF028729">
    <property type="entry name" value="E3_ubiquit_lig_SCF_Skp"/>
    <property type="match status" value="1"/>
</dbReference>
<dbReference type="SMART" id="SM00512">
    <property type="entry name" value="Skp1"/>
    <property type="match status" value="1"/>
</dbReference>
<dbReference type="SUPFAM" id="SSF54695">
    <property type="entry name" value="POZ domain"/>
    <property type="match status" value="1"/>
</dbReference>
<dbReference type="SUPFAM" id="SSF81382">
    <property type="entry name" value="Skp1 dimerisation domain-like"/>
    <property type="match status" value="1"/>
</dbReference>
<comment type="function">
    <text evidence="1">Involved in ubiquitination and subsequent proteasomal degradation of target proteins. Together with CUL1, RBX1 and a F-box protein, it forms a SCF E3 ubiquitin ligase complex. The functional specificity of this complex depends on the type of F-box protein. In the SCF complex, it serves as an adapter that links the F-box protein to CUL1 (By similarity).</text>
</comment>
<comment type="pathway">
    <text>Protein modification; protein ubiquitination.</text>
</comment>
<comment type="subunit">
    <text evidence="1 2 4 5">Part of a SCF (SKP1-cullin-F-box) protein ligase complex (By similarity). Interacts with CPR1/CPR30, At3g61590 and At4g11590.</text>
</comment>
<comment type="subcellular location">
    <subcellularLocation>
        <location evidence="1">Nucleus</location>
    </subcellularLocation>
</comment>
<comment type="tissue specificity">
    <text evidence="3">Mainly detected in the siliques.</text>
</comment>
<comment type="similarity">
    <text evidence="6">Belongs to the SKP1 family.</text>
</comment>
<proteinExistence type="evidence at protein level"/>
<protein>
    <recommendedName>
        <fullName>SKP1-like protein 16</fullName>
        <shortName>AtSK16</shortName>
    </recommendedName>
</protein>
<feature type="chain" id="PRO_0000375257" description="SKP1-like protein 16">
    <location>
        <begin position="1"/>
        <end position="170"/>
    </location>
</feature>
<feature type="region of interest" description="Interaction with the F-box domain of F-box proteins" evidence="1">
    <location>
        <begin position="109"/>
        <end position="167"/>
    </location>
</feature>
<keyword id="KW-0539">Nucleus</keyword>
<keyword id="KW-1185">Reference proteome</keyword>
<keyword id="KW-0833">Ubl conjugation pathway</keyword>